<reference key="1">
    <citation type="journal article" date="2005" name="J. Bacteriol.">
        <title>Insights on evolution of virulence and resistance from the complete genome analysis of an early methicillin-resistant Staphylococcus aureus strain and a biofilm-producing methicillin-resistant Staphylococcus epidermidis strain.</title>
        <authorList>
            <person name="Gill S.R."/>
            <person name="Fouts D.E."/>
            <person name="Archer G.L."/>
            <person name="Mongodin E.F."/>
            <person name="DeBoy R.T."/>
            <person name="Ravel J."/>
            <person name="Paulsen I.T."/>
            <person name="Kolonay J.F."/>
            <person name="Brinkac L.M."/>
            <person name="Beanan M.J."/>
            <person name="Dodson R.J."/>
            <person name="Daugherty S.C."/>
            <person name="Madupu R."/>
            <person name="Angiuoli S.V."/>
            <person name="Durkin A.S."/>
            <person name="Haft D.H."/>
            <person name="Vamathevan J.J."/>
            <person name="Khouri H."/>
            <person name="Utterback T.R."/>
            <person name="Lee C."/>
            <person name="Dimitrov G."/>
            <person name="Jiang L."/>
            <person name="Qin H."/>
            <person name="Weidman J."/>
            <person name="Tran K."/>
            <person name="Kang K.H."/>
            <person name="Hance I.R."/>
            <person name="Nelson K.E."/>
            <person name="Fraser C.M."/>
        </authorList>
    </citation>
    <scope>NUCLEOTIDE SEQUENCE [LARGE SCALE GENOMIC DNA]</scope>
    <source>
        <strain>ATCC 35984 / DSM 28319 / BCRC 17069 / CCUG 31568 / BM 3577 / RP62A</strain>
    </source>
</reference>
<name>DNAK_STAEQ</name>
<feature type="chain" id="PRO_0000078544" description="Chaperone protein DnaK">
    <location>
        <begin position="1"/>
        <end position="609"/>
    </location>
</feature>
<feature type="region of interest" description="Disordered" evidence="2">
    <location>
        <begin position="525"/>
        <end position="554"/>
    </location>
</feature>
<feature type="region of interest" description="Disordered" evidence="2">
    <location>
        <begin position="574"/>
        <end position="609"/>
    </location>
</feature>
<feature type="compositionally biased region" description="Basic and acidic residues" evidence="2">
    <location>
        <begin position="525"/>
        <end position="542"/>
    </location>
</feature>
<feature type="compositionally biased region" description="Low complexity" evidence="2">
    <location>
        <begin position="574"/>
        <end position="587"/>
    </location>
</feature>
<feature type="compositionally biased region" description="Basic and acidic residues" evidence="2">
    <location>
        <begin position="597"/>
        <end position="609"/>
    </location>
</feature>
<feature type="modified residue" description="Phosphothreonine; by autocatalysis" evidence="1">
    <location>
        <position position="173"/>
    </location>
</feature>
<organism>
    <name type="scientific">Staphylococcus epidermidis (strain ATCC 35984 / DSM 28319 / BCRC 17069 / CCUG 31568 / BM 3577 / RP62A)</name>
    <dbReference type="NCBI Taxonomy" id="176279"/>
    <lineage>
        <taxon>Bacteria</taxon>
        <taxon>Bacillati</taxon>
        <taxon>Bacillota</taxon>
        <taxon>Bacilli</taxon>
        <taxon>Bacillales</taxon>
        <taxon>Staphylococcaceae</taxon>
        <taxon>Staphylococcus</taxon>
    </lineage>
</organism>
<evidence type="ECO:0000255" key="1">
    <source>
        <dbReference type="HAMAP-Rule" id="MF_00332"/>
    </source>
</evidence>
<evidence type="ECO:0000256" key="2">
    <source>
        <dbReference type="SAM" id="MobiDB-lite"/>
    </source>
</evidence>
<dbReference type="EMBL" id="CP000029">
    <property type="protein sequence ID" value="AAW54483.1"/>
    <property type="molecule type" value="Genomic_DNA"/>
</dbReference>
<dbReference type="RefSeq" id="WP_001831007.1">
    <property type="nucleotide sequence ID" value="NC_002976.3"/>
</dbReference>
<dbReference type="SMR" id="Q5HNW6"/>
<dbReference type="STRING" id="176279.SERP1148"/>
<dbReference type="GeneID" id="50018617"/>
<dbReference type="KEGG" id="ser:SERP1148"/>
<dbReference type="eggNOG" id="COG0443">
    <property type="taxonomic scope" value="Bacteria"/>
</dbReference>
<dbReference type="HOGENOM" id="CLU_005965_2_1_9"/>
<dbReference type="Proteomes" id="UP000000531">
    <property type="component" value="Chromosome"/>
</dbReference>
<dbReference type="GO" id="GO:0005524">
    <property type="term" value="F:ATP binding"/>
    <property type="evidence" value="ECO:0007669"/>
    <property type="project" value="UniProtKB-UniRule"/>
</dbReference>
<dbReference type="GO" id="GO:0140662">
    <property type="term" value="F:ATP-dependent protein folding chaperone"/>
    <property type="evidence" value="ECO:0007669"/>
    <property type="project" value="InterPro"/>
</dbReference>
<dbReference type="GO" id="GO:0051082">
    <property type="term" value="F:unfolded protein binding"/>
    <property type="evidence" value="ECO:0007669"/>
    <property type="project" value="InterPro"/>
</dbReference>
<dbReference type="CDD" id="cd10234">
    <property type="entry name" value="ASKHA_NBD_HSP70_DnaK-like"/>
    <property type="match status" value="1"/>
</dbReference>
<dbReference type="FunFam" id="2.60.34.10:FF:000014">
    <property type="entry name" value="Chaperone protein DnaK HSP70"/>
    <property type="match status" value="1"/>
</dbReference>
<dbReference type="FunFam" id="1.20.1270.10:FF:000001">
    <property type="entry name" value="Molecular chaperone DnaK"/>
    <property type="match status" value="1"/>
</dbReference>
<dbReference type="FunFam" id="3.30.420.40:FF:000071">
    <property type="entry name" value="Molecular chaperone DnaK"/>
    <property type="match status" value="1"/>
</dbReference>
<dbReference type="FunFam" id="3.90.640.10:FF:000003">
    <property type="entry name" value="Molecular chaperone DnaK"/>
    <property type="match status" value="1"/>
</dbReference>
<dbReference type="Gene3D" id="1.20.1270.10">
    <property type="match status" value="1"/>
</dbReference>
<dbReference type="Gene3D" id="3.30.420.40">
    <property type="match status" value="2"/>
</dbReference>
<dbReference type="Gene3D" id="3.90.640.10">
    <property type="entry name" value="Actin, Chain A, domain 4"/>
    <property type="match status" value="1"/>
</dbReference>
<dbReference type="Gene3D" id="2.60.34.10">
    <property type="entry name" value="Substrate Binding Domain Of DNAk, Chain A, domain 1"/>
    <property type="match status" value="1"/>
</dbReference>
<dbReference type="HAMAP" id="MF_00332">
    <property type="entry name" value="DnaK"/>
    <property type="match status" value="1"/>
</dbReference>
<dbReference type="InterPro" id="IPR043129">
    <property type="entry name" value="ATPase_NBD"/>
</dbReference>
<dbReference type="InterPro" id="IPR012725">
    <property type="entry name" value="Chaperone_DnaK"/>
</dbReference>
<dbReference type="InterPro" id="IPR018181">
    <property type="entry name" value="Heat_shock_70_CS"/>
</dbReference>
<dbReference type="InterPro" id="IPR029048">
    <property type="entry name" value="HSP70_C_sf"/>
</dbReference>
<dbReference type="InterPro" id="IPR029047">
    <property type="entry name" value="HSP70_peptide-bd_sf"/>
</dbReference>
<dbReference type="InterPro" id="IPR013126">
    <property type="entry name" value="Hsp_70_fam"/>
</dbReference>
<dbReference type="NCBIfam" id="NF001413">
    <property type="entry name" value="PRK00290.1"/>
    <property type="match status" value="1"/>
</dbReference>
<dbReference type="NCBIfam" id="TIGR02350">
    <property type="entry name" value="prok_dnaK"/>
    <property type="match status" value="1"/>
</dbReference>
<dbReference type="PANTHER" id="PTHR19375">
    <property type="entry name" value="HEAT SHOCK PROTEIN 70KDA"/>
    <property type="match status" value="1"/>
</dbReference>
<dbReference type="Pfam" id="PF00012">
    <property type="entry name" value="HSP70"/>
    <property type="match status" value="1"/>
</dbReference>
<dbReference type="PRINTS" id="PR00301">
    <property type="entry name" value="HEATSHOCK70"/>
</dbReference>
<dbReference type="SUPFAM" id="SSF53067">
    <property type="entry name" value="Actin-like ATPase domain"/>
    <property type="match status" value="2"/>
</dbReference>
<dbReference type="SUPFAM" id="SSF100934">
    <property type="entry name" value="Heat shock protein 70kD (HSP70), C-terminal subdomain"/>
    <property type="match status" value="1"/>
</dbReference>
<dbReference type="SUPFAM" id="SSF100920">
    <property type="entry name" value="Heat shock protein 70kD (HSP70), peptide-binding domain"/>
    <property type="match status" value="1"/>
</dbReference>
<dbReference type="PROSITE" id="PS00297">
    <property type="entry name" value="HSP70_1"/>
    <property type="match status" value="1"/>
</dbReference>
<dbReference type="PROSITE" id="PS00329">
    <property type="entry name" value="HSP70_2"/>
    <property type="match status" value="1"/>
</dbReference>
<dbReference type="PROSITE" id="PS01036">
    <property type="entry name" value="HSP70_3"/>
    <property type="match status" value="1"/>
</dbReference>
<protein>
    <recommendedName>
        <fullName evidence="1">Chaperone protein DnaK</fullName>
    </recommendedName>
    <alternativeName>
        <fullName evidence="1">HSP70</fullName>
    </alternativeName>
    <alternativeName>
        <fullName evidence="1">Heat shock 70 kDa protein</fullName>
    </alternativeName>
    <alternativeName>
        <fullName evidence="1">Heat shock protein 70</fullName>
    </alternativeName>
</protein>
<proteinExistence type="inferred from homology"/>
<keyword id="KW-0067">ATP-binding</keyword>
<keyword id="KW-0143">Chaperone</keyword>
<keyword id="KW-0547">Nucleotide-binding</keyword>
<keyword id="KW-0597">Phosphoprotein</keyword>
<keyword id="KW-1185">Reference proteome</keyword>
<keyword id="KW-0346">Stress response</keyword>
<gene>
    <name evidence="1" type="primary">dnaK</name>
    <name type="ordered locus">SERP1148</name>
</gene>
<sequence>MGKVIGIDLGTTNSCVSILEGDEPKVIQNPEGARTTPSVVAFKNGETQVGEVAKRQAITNPNTVQSIKRHMGTDYKVDIEGKSYTPQELSAMILQNLKSTAENYLGDTVDKAVITVPAYFNDGERQATKDAGKIAGLEVERIINEPTAAALAYGLDKTETDQKVLVFDLGGGTFDVSILELGDGVFEVLSTAGDNKLGGDDFDQVIIDYLVSEFKKENGVDLSQDKMALQRLKDAAEKAKKDLSGVSQTQISLPFISAGENGPLHLEISLTRSKFEELADSLIKKTMEPTRQALKDAGLSTSEIDEVILVGGSTRIPAVQEAVKKEIGKEPHKGVNPDEVVAMGAAIQAGVITGDVKDVVLLDVTPLSLGIEIMGGRMNTLIERNTTIPTSKSQVYSTAADNQPAVDIHVLQGERPMASDNKTLGRFQLTDIPPAPRGVPQIEVTFDIDKNGIVNVTAKDLGTNKEQNITIQSSSSLSDEEIDRMVKDAEENAEADKKRREEVDLRNEADSLVFQVEKTVKDLGENISDEDKKNAEEKKDALKTALEGEDIDDIKAKKEELEKVIQELSAKVYEQAQQAQQQGQEEQGSQDSTVEDADFKEVKDDEDKK</sequence>
<accession>Q5HNW6</accession>
<comment type="function">
    <text evidence="1">Acts as a chaperone.</text>
</comment>
<comment type="induction">
    <text evidence="1">By stress conditions e.g. heat shock.</text>
</comment>
<comment type="similarity">
    <text evidence="1">Belongs to the heat shock protein 70 family.</text>
</comment>